<evidence type="ECO:0000255" key="1"/>
<evidence type="ECO:0000305" key="2"/>
<comment type="subcellular location">
    <subcellularLocation>
        <location evidence="2">Membrane</location>
        <topology evidence="2">Single-pass membrane protein</topology>
    </subcellularLocation>
</comment>
<comment type="similarity">
    <text evidence="2">Belongs to the LicD transferase family.</text>
</comment>
<organism>
    <name type="scientific">Caenorhabditis elegans</name>
    <dbReference type="NCBI Taxonomy" id="6239"/>
    <lineage>
        <taxon>Eukaryota</taxon>
        <taxon>Metazoa</taxon>
        <taxon>Ecdysozoa</taxon>
        <taxon>Nematoda</taxon>
        <taxon>Chromadorea</taxon>
        <taxon>Rhabditida</taxon>
        <taxon>Rhabditina</taxon>
        <taxon>Rhabditomorpha</taxon>
        <taxon>Rhabditoidea</taxon>
        <taxon>Rhabditidae</taxon>
        <taxon>Peloderinae</taxon>
        <taxon>Caenorhabditis</taxon>
    </lineage>
</organism>
<sequence>MRKHFVLFSFPFLLLSSMLIFYQTTVFRNQLNEENDYTGGPIVPFMKRSLALHYQTCESFLNSLNTTVPVLLIDVDVLKMLDENACNLPTGRPTKIGVDVKYLSATWLLQDSRFEIVYYTNDTEKDFLDFRSEPRKIIPKKFSTCWVENLAVPADIKLFVEFWKRAKFVNCMNLHIPRAGSKVRMPARPSSEVLSRLRDELIENRMFPFLNGGTLLGWYRECSVIPHTLDMDISVFAEDFNLNFVEQMEQNLSDFRIKRKFGMTNDSFELTLAPKTGFKVFIDVFLMYKGVENGSVTHHWVGGVAPDGTKYKYSYPVYDPFCAADLHGHIFWVTCTPNEKIVKEYGQLWYLDHLTSKYSWNSSGKNVKKNGKWTKEQMKMVYKVFKR</sequence>
<reference key="1">
    <citation type="journal article" date="1998" name="Science">
        <title>Genome sequence of the nematode C. elegans: a platform for investigating biology.</title>
        <authorList>
            <consortium name="The C. elegans sequencing consortium"/>
        </authorList>
    </citation>
    <scope>NUCLEOTIDE SEQUENCE [LARGE SCALE GENOMIC DNA]</scope>
    <source>
        <strain>Bristol N2</strain>
    </source>
</reference>
<accession>Q09341</accession>
<gene>
    <name type="ORF">W02B3.4</name>
</gene>
<feature type="chain" id="PRO_0000204728" description="Uncharacterized protein W02B3.4">
    <location>
        <begin position="1"/>
        <end position="387"/>
    </location>
</feature>
<feature type="transmembrane region" description="Helical" evidence="1">
    <location>
        <begin position="5"/>
        <end position="25"/>
    </location>
</feature>
<name>YR24_CAEEL</name>
<dbReference type="EMBL" id="FO080476">
    <property type="protein sequence ID" value="CCD63983.1"/>
    <property type="molecule type" value="Genomic_DNA"/>
</dbReference>
<dbReference type="PIR" id="T26097">
    <property type="entry name" value="T26097"/>
</dbReference>
<dbReference type="RefSeq" id="NP_497236.2">
    <property type="nucleotide sequence ID" value="NM_064835.5"/>
</dbReference>
<dbReference type="FunCoup" id="Q09341">
    <property type="interactions" value="1207"/>
</dbReference>
<dbReference type="STRING" id="6239.W02B3.4.1"/>
<dbReference type="PaxDb" id="6239-W02B3.4"/>
<dbReference type="EnsemblMetazoa" id="W02B3.4.1">
    <property type="protein sequence ID" value="W02B3.4.1"/>
    <property type="gene ID" value="WBGene00020924"/>
</dbReference>
<dbReference type="GeneID" id="189104"/>
<dbReference type="KEGG" id="cel:CELE_W02B3.4"/>
<dbReference type="UCSC" id="W02B3.4">
    <property type="organism name" value="c. elegans"/>
</dbReference>
<dbReference type="AGR" id="WB:WBGene00020924"/>
<dbReference type="CTD" id="189104"/>
<dbReference type="WormBase" id="W02B3.4">
    <property type="protein sequence ID" value="CE34600"/>
    <property type="gene ID" value="WBGene00020924"/>
</dbReference>
<dbReference type="eggNOG" id="ENOG502QUDN">
    <property type="taxonomic scope" value="Eukaryota"/>
</dbReference>
<dbReference type="GeneTree" id="ENSGT00390000014471"/>
<dbReference type="HOGENOM" id="CLU_041832_0_0_1"/>
<dbReference type="InParanoid" id="Q09341"/>
<dbReference type="OMA" id="WVTCTPN"/>
<dbReference type="OrthoDB" id="444255at2759"/>
<dbReference type="PhylomeDB" id="Q09341"/>
<dbReference type="PRO" id="PR:Q09341"/>
<dbReference type="Proteomes" id="UP000001940">
    <property type="component" value="Chromosome III"/>
</dbReference>
<dbReference type="Bgee" id="WBGene00020924">
    <property type="expression patterns" value="Expressed in adult organism and 3 other cell types or tissues"/>
</dbReference>
<dbReference type="GO" id="GO:0016020">
    <property type="term" value="C:membrane"/>
    <property type="evidence" value="ECO:0007669"/>
    <property type="project" value="UniProtKB-SubCell"/>
</dbReference>
<dbReference type="GO" id="GO:0006486">
    <property type="term" value="P:protein glycosylation"/>
    <property type="evidence" value="ECO:0000318"/>
    <property type="project" value="GO_Central"/>
</dbReference>
<dbReference type="InterPro" id="IPR009644">
    <property type="entry name" value="FKTN-rel"/>
</dbReference>
<dbReference type="PANTHER" id="PTHR15407:SF41">
    <property type="entry name" value="FUKUTIN"/>
    <property type="match status" value="1"/>
</dbReference>
<dbReference type="PANTHER" id="PTHR15407">
    <property type="entry name" value="FUKUTIN-RELATED"/>
    <property type="match status" value="1"/>
</dbReference>
<dbReference type="Pfam" id="PF24413">
    <property type="entry name" value="W02B3_4_N"/>
    <property type="match status" value="1"/>
</dbReference>
<protein>
    <recommendedName>
        <fullName>Uncharacterized protein W02B3.4</fullName>
    </recommendedName>
</protein>
<keyword id="KW-0472">Membrane</keyword>
<keyword id="KW-1185">Reference proteome</keyword>
<keyword id="KW-0812">Transmembrane</keyword>
<keyword id="KW-1133">Transmembrane helix</keyword>
<proteinExistence type="inferred from homology"/>